<protein>
    <recommendedName>
        <fullName evidence="1">UDP-N-acetylglucosamine 1-carboxyvinyltransferase</fullName>
        <ecNumber evidence="1">2.5.1.7</ecNumber>
    </recommendedName>
    <alternativeName>
        <fullName evidence="1">Enoylpyruvate transferase</fullName>
    </alternativeName>
    <alternativeName>
        <fullName evidence="1">UDP-N-acetylglucosamine enolpyruvyl transferase</fullName>
        <shortName evidence="1">EPT</shortName>
    </alternativeName>
</protein>
<organism>
    <name type="scientific">Albidiferax ferrireducens (strain ATCC BAA-621 / DSM 15236 / T118)</name>
    <name type="common">Rhodoferax ferrireducens</name>
    <dbReference type="NCBI Taxonomy" id="338969"/>
    <lineage>
        <taxon>Bacteria</taxon>
        <taxon>Pseudomonadati</taxon>
        <taxon>Pseudomonadota</taxon>
        <taxon>Betaproteobacteria</taxon>
        <taxon>Burkholderiales</taxon>
        <taxon>Comamonadaceae</taxon>
        <taxon>Rhodoferax</taxon>
    </lineage>
</organism>
<keyword id="KW-0131">Cell cycle</keyword>
<keyword id="KW-0132">Cell division</keyword>
<keyword id="KW-0133">Cell shape</keyword>
<keyword id="KW-0961">Cell wall biogenesis/degradation</keyword>
<keyword id="KW-0963">Cytoplasm</keyword>
<keyword id="KW-0573">Peptidoglycan synthesis</keyword>
<keyword id="KW-0670">Pyruvate</keyword>
<keyword id="KW-1185">Reference proteome</keyword>
<keyword id="KW-0808">Transferase</keyword>
<comment type="function">
    <text evidence="1">Cell wall formation. Adds enolpyruvyl to UDP-N-acetylglucosamine.</text>
</comment>
<comment type="catalytic activity">
    <reaction evidence="1">
        <text>phosphoenolpyruvate + UDP-N-acetyl-alpha-D-glucosamine = UDP-N-acetyl-3-O-(1-carboxyvinyl)-alpha-D-glucosamine + phosphate</text>
        <dbReference type="Rhea" id="RHEA:18681"/>
        <dbReference type="ChEBI" id="CHEBI:43474"/>
        <dbReference type="ChEBI" id="CHEBI:57705"/>
        <dbReference type="ChEBI" id="CHEBI:58702"/>
        <dbReference type="ChEBI" id="CHEBI:68483"/>
        <dbReference type="EC" id="2.5.1.7"/>
    </reaction>
</comment>
<comment type="pathway">
    <text evidence="1">Cell wall biogenesis; peptidoglycan biosynthesis.</text>
</comment>
<comment type="subcellular location">
    <subcellularLocation>
        <location evidence="1">Cytoplasm</location>
    </subcellularLocation>
</comment>
<comment type="similarity">
    <text evidence="1">Belongs to the EPSP synthase family. MurA subfamily.</text>
</comment>
<sequence length="421" mass="44910">MDKLLIRGGRSLKGEVLISGAKNATLPELCACLLTSAPVTLTNVPRLQDVATMLKLIRNMGVAAERSDDGRVTVDASALSSPEAPYELVKTMRASVLALGPLLTRFGEATVSLPGGCAIGSRPVDQHIKGLTAMGAEIVVEHGYMIAKLPKGWTRLKGARIATDMVTVTGTENFLMAATLAEGVTILENAAQEPEITDLAEMLIKMGANIEGHGSSRIRIQGVESLHGCTHQVVADRIETGTFMCAVAATGGDVLLKHGRIDHLEAVVEKLRDAGATVARVEGGIRVQSQGRLKSQSFRTTEYPGFPTDMQAQFMALNCISHGTAVVTETIFENRFMHVNEMVRLGANIQIDSKVAVVEGVEKLSGATVMATDLRASASLVIAGLVADGETVVERIYHLDRGYDQMEAKLRGLGADIERIK</sequence>
<feature type="chain" id="PRO_1000023083" description="UDP-N-acetylglucosamine 1-carboxyvinyltransferase">
    <location>
        <begin position="1"/>
        <end position="421"/>
    </location>
</feature>
<feature type="active site" description="Proton donor" evidence="1">
    <location>
        <position position="117"/>
    </location>
</feature>
<feature type="binding site" evidence="1">
    <location>
        <begin position="22"/>
        <end position="23"/>
    </location>
    <ligand>
        <name>phosphoenolpyruvate</name>
        <dbReference type="ChEBI" id="CHEBI:58702"/>
    </ligand>
</feature>
<feature type="binding site" evidence="1">
    <location>
        <position position="93"/>
    </location>
    <ligand>
        <name>UDP-N-acetyl-alpha-D-glucosamine</name>
        <dbReference type="ChEBI" id="CHEBI:57705"/>
    </ligand>
</feature>
<feature type="binding site" evidence="1">
    <location>
        <begin position="122"/>
        <end position="126"/>
    </location>
    <ligand>
        <name>UDP-N-acetyl-alpha-D-glucosamine</name>
        <dbReference type="ChEBI" id="CHEBI:57705"/>
    </ligand>
</feature>
<feature type="binding site" evidence="1">
    <location>
        <position position="309"/>
    </location>
    <ligand>
        <name>UDP-N-acetyl-alpha-D-glucosamine</name>
        <dbReference type="ChEBI" id="CHEBI:57705"/>
    </ligand>
</feature>
<feature type="binding site" evidence="1">
    <location>
        <position position="331"/>
    </location>
    <ligand>
        <name>UDP-N-acetyl-alpha-D-glucosamine</name>
        <dbReference type="ChEBI" id="CHEBI:57705"/>
    </ligand>
</feature>
<feature type="modified residue" description="2-(S-cysteinyl)pyruvic acid O-phosphothioketal" evidence="1">
    <location>
        <position position="117"/>
    </location>
</feature>
<dbReference type="EC" id="2.5.1.7" evidence="1"/>
<dbReference type="EMBL" id="CP000267">
    <property type="protein sequence ID" value="ABD70655.1"/>
    <property type="molecule type" value="Genomic_DNA"/>
</dbReference>
<dbReference type="RefSeq" id="WP_011465221.1">
    <property type="nucleotide sequence ID" value="NC_007908.1"/>
</dbReference>
<dbReference type="SMR" id="Q21U98"/>
<dbReference type="STRING" id="338969.Rfer_2944"/>
<dbReference type="KEGG" id="rfr:Rfer_2944"/>
<dbReference type="eggNOG" id="COG0766">
    <property type="taxonomic scope" value="Bacteria"/>
</dbReference>
<dbReference type="HOGENOM" id="CLU_027387_0_0_4"/>
<dbReference type="OrthoDB" id="9803760at2"/>
<dbReference type="UniPathway" id="UPA00219"/>
<dbReference type="Proteomes" id="UP000008332">
    <property type="component" value="Chromosome"/>
</dbReference>
<dbReference type="GO" id="GO:0005737">
    <property type="term" value="C:cytoplasm"/>
    <property type="evidence" value="ECO:0007669"/>
    <property type="project" value="UniProtKB-SubCell"/>
</dbReference>
<dbReference type="GO" id="GO:0008760">
    <property type="term" value="F:UDP-N-acetylglucosamine 1-carboxyvinyltransferase activity"/>
    <property type="evidence" value="ECO:0007669"/>
    <property type="project" value="UniProtKB-UniRule"/>
</dbReference>
<dbReference type="GO" id="GO:0051301">
    <property type="term" value="P:cell division"/>
    <property type="evidence" value="ECO:0007669"/>
    <property type="project" value="UniProtKB-KW"/>
</dbReference>
<dbReference type="GO" id="GO:0071555">
    <property type="term" value="P:cell wall organization"/>
    <property type="evidence" value="ECO:0007669"/>
    <property type="project" value="UniProtKB-KW"/>
</dbReference>
<dbReference type="GO" id="GO:0009252">
    <property type="term" value="P:peptidoglycan biosynthetic process"/>
    <property type="evidence" value="ECO:0007669"/>
    <property type="project" value="UniProtKB-UniRule"/>
</dbReference>
<dbReference type="GO" id="GO:0008360">
    <property type="term" value="P:regulation of cell shape"/>
    <property type="evidence" value="ECO:0007669"/>
    <property type="project" value="UniProtKB-KW"/>
</dbReference>
<dbReference type="GO" id="GO:0019277">
    <property type="term" value="P:UDP-N-acetylgalactosamine biosynthetic process"/>
    <property type="evidence" value="ECO:0007669"/>
    <property type="project" value="InterPro"/>
</dbReference>
<dbReference type="CDD" id="cd01555">
    <property type="entry name" value="UdpNAET"/>
    <property type="match status" value="1"/>
</dbReference>
<dbReference type="FunFam" id="3.65.10.10:FF:000001">
    <property type="entry name" value="UDP-N-acetylglucosamine 1-carboxyvinyltransferase"/>
    <property type="match status" value="1"/>
</dbReference>
<dbReference type="Gene3D" id="3.65.10.10">
    <property type="entry name" value="Enolpyruvate transferase domain"/>
    <property type="match status" value="2"/>
</dbReference>
<dbReference type="HAMAP" id="MF_00111">
    <property type="entry name" value="MurA"/>
    <property type="match status" value="1"/>
</dbReference>
<dbReference type="InterPro" id="IPR001986">
    <property type="entry name" value="Enolpyruvate_Tfrase_dom"/>
</dbReference>
<dbReference type="InterPro" id="IPR036968">
    <property type="entry name" value="Enolpyruvate_Tfrase_sf"/>
</dbReference>
<dbReference type="InterPro" id="IPR050068">
    <property type="entry name" value="MurA_subfamily"/>
</dbReference>
<dbReference type="InterPro" id="IPR013792">
    <property type="entry name" value="RNA3'P_cycl/enolpyr_Trfase_a/b"/>
</dbReference>
<dbReference type="InterPro" id="IPR005750">
    <property type="entry name" value="UDP_GlcNAc_COvinyl_MurA"/>
</dbReference>
<dbReference type="NCBIfam" id="TIGR01072">
    <property type="entry name" value="murA"/>
    <property type="match status" value="1"/>
</dbReference>
<dbReference type="NCBIfam" id="NF006873">
    <property type="entry name" value="PRK09369.1"/>
    <property type="match status" value="1"/>
</dbReference>
<dbReference type="PANTHER" id="PTHR43783">
    <property type="entry name" value="UDP-N-ACETYLGLUCOSAMINE 1-CARBOXYVINYLTRANSFERASE"/>
    <property type="match status" value="1"/>
</dbReference>
<dbReference type="PANTHER" id="PTHR43783:SF1">
    <property type="entry name" value="UDP-N-ACETYLGLUCOSAMINE 1-CARBOXYVINYLTRANSFERASE"/>
    <property type="match status" value="1"/>
</dbReference>
<dbReference type="Pfam" id="PF00275">
    <property type="entry name" value="EPSP_synthase"/>
    <property type="match status" value="1"/>
</dbReference>
<dbReference type="SUPFAM" id="SSF55205">
    <property type="entry name" value="EPT/RTPC-like"/>
    <property type="match status" value="1"/>
</dbReference>
<name>MURA_ALBFT</name>
<reference key="1">
    <citation type="submission" date="2006-02" db="EMBL/GenBank/DDBJ databases">
        <title>Complete sequence of chromosome of Rhodoferax ferrireducens DSM 15236.</title>
        <authorList>
            <person name="Copeland A."/>
            <person name="Lucas S."/>
            <person name="Lapidus A."/>
            <person name="Barry K."/>
            <person name="Detter J.C."/>
            <person name="Glavina del Rio T."/>
            <person name="Hammon N."/>
            <person name="Israni S."/>
            <person name="Pitluck S."/>
            <person name="Brettin T."/>
            <person name="Bruce D."/>
            <person name="Han C."/>
            <person name="Tapia R."/>
            <person name="Gilna P."/>
            <person name="Kiss H."/>
            <person name="Schmutz J."/>
            <person name="Larimer F."/>
            <person name="Land M."/>
            <person name="Kyrpides N."/>
            <person name="Ivanova N."/>
            <person name="Richardson P."/>
        </authorList>
    </citation>
    <scope>NUCLEOTIDE SEQUENCE [LARGE SCALE GENOMIC DNA]</scope>
    <source>
        <strain>ATCC BAA-621 / DSM 15236 / T118</strain>
    </source>
</reference>
<accession>Q21U98</accession>
<gene>
    <name evidence="1" type="primary">murA</name>
    <name type="ordered locus">Rfer_2944</name>
</gene>
<evidence type="ECO:0000255" key="1">
    <source>
        <dbReference type="HAMAP-Rule" id="MF_00111"/>
    </source>
</evidence>
<proteinExistence type="inferred from homology"/>